<sequence>MGANSFGRFFTLTTFGESRSAGVGAVIDGCPAGIPLCADDIQKELNRRKPGSSGPFSTKRNEDDICEILSGVFEGRTLGSPIAVLVRNKETSSKDYENLKDVYRPGHADYSYDLKYGHRDYRGGGRSSGRETIGRLIGGAVAKKMLEAFAIKDGKKTIEVQVRAEEIAGIKTSLPLKEDEALPEPIFEKLSALASNGDSAGCILSCSVLNVSEGLGSPVFGKLDAVLSQALMSIGAVKGIEIGGGFYSASITGSENNDISKNFSGGILGGISCNMDYPLNLNHENGRKDENTCQIDFRIAVKPVPSIKMNQASFNKKGEKCMLSVGGNHDICLFPRIVPVVEAMCYLVLADAFLVSKIERF</sequence>
<accession>Q73NM0</accession>
<dbReference type="EC" id="4.2.3.5" evidence="1"/>
<dbReference type="EMBL" id="AE017226">
    <property type="protein sequence ID" value="AAS11621.1"/>
    <property type="molecule type" value="Genomic_DNA"/>
</dbReference>
<dbReference type="RefSeq" id="NP_971740.1">
    <property type="nucleotide sequence ID" value="NC_002967.9"/>
</dbReference>
<dbReference type="RefSeq" id="WP_002682425.1">
    <property type="nucleotide sequence ID" value="NC_002967.9"/>
</dbReference>
<dbReference type="SMR" id="Q73NM0"/>
<dbReference type="STRING" id="243275.TDE_1132"/>
<dbReference type="PaxDb" id="243275-TDE_1132"/>
<dbReference type="GeneID" id="2739991"/>
<dbReference type="KEGG" id="tde:TDE_1132"/>
<dbReference type="PATRIC" id="fig|243275.7.peg.1092"/>
<dbReference type="eggNOG" id="COG0082">
    <property type="taxonomic scope" value="Bacteria"/>
</dbReference>
<dbReference type="HOGENOM" id="CLU_034547_0_0_12"/>
<dbReference type="OrthoDB" id="9771806at2"/>
<dbReference type="UniPathway" id="UPA00053">
    <property type="reaction ID" value="UER00090"/>
</dbReference>
<dbReference type="Proteomes" id="UP000008212">
    <property type="component" value="Chromosome"/>
</dbReference>
<dbReference type="GO" id="GO:0005829">
    <property type="term" value="C:cytosol"/>
    <property type="evidence" value="ECO:0007669"/>
    <property type="project" value="TreeGrafter"/>
</dbReference>
<dbReference type="GO" id="GO:0004107">
    <property type="term" value="F:chorismate synthase activity"/>
    <property type="evidence" value="ECO:0007669"/>
    <property type="project" value="UniProtKB-UniRule"/>
</dbReference>
<dbReference type="GO" id="GO:0010181">
    <property type="term" value="F:FMN binding"/>
    <property type="evidence" value="ECO:0007669"/>
    <property type="project" value="TreeGrafter"/>
</dbReference>
<dbReference type="GO" id="GO:0008652">
    <property type="term" value="P:amino acid biosynthetic process"/>
    <property type="evidence" value="ECO:0007669"/>
    <property type="project" value="UniProtKB-KW"/>
</dbReference>
<dbReference type="GO" id="GO:0009073">
    <property type="term" value="P:aromatic amino acid family biosynthetic process"/>
    <property type="evidence" value="ECO:0007669"/>
    <property type="project" value="UniProtKB-KW"/>
</dbReference>
<dbReference type="GO" id="GO:0009423">
    <property type="term" value="P:chorismate biosynthetic process"/>
    <property type="evidence" value="ECO:0007669"/>
    <property type="project" value="UniProtKB-UniRule"/>
</dbReference>
<dbReference type="CDD" id="cd07304">
    <property type="entry name" value="Chorismate_synthase"/>
    <property type="match status" value="1"/>
</dbReference>
<dbReference type="Gene3D" id="3.60.150.10">
    <property type="entry name" value="Chorismate synthase AroC"/>
    <property type="match status" value="1"/>
</dbReference>
<dbReference type="HAMAP" id="MF_00300">
    <property type="entry name" value="Chorismate_synth"/>
    <property type="match status" value="1"/>
</dbReference>
<dbReference type="InterPro" id="IPR000453">
    <property type="entry name" value="Chorismate_synth"/>
</dbReference>
<dbReference type="InterPro" id="IPR035904">
    <property type="entry name" value="Chorismate_synth_AroC_sf"/>
</dbReference>
<dbReference type="NCBIfam" id="TIGR00033">
    <property type="entry name" value="aroC"/>
    <property type="match status" value="1"/>
</dbReference>
<dbReference type="PANTHER" id="PTHR21085">
    <property type="entry name" value="CHORISMATE SYNTHASE"/>
    <property type="match status" value="1"/>
</dbReference>
<dbReference type="PANTHER" id="PTHR21085:SF0">
    <property type="entry name" value="CHORISMATE SYNTHASE"/>
    <property type="match status" value="1"/>
</dbReference>
<dbReference type="Pfam" id="PF01264">
    <property type="entry name" value="Chorismate_synt"/>
    <property type="match status" value="1"/>
</dbReference>
<dbReference type="PIRSF" id="PIRSF001456">
    <property type="entry name" value="Chorismate_synth"/>
    <property type="match status" value="1"/>
</dbReference>
<dbReference type="SUPFAM" id="SSF103263">
    <property type="entry name" value="Chorismate synthase, AroC"/>
    <property type="match status" value="1"/>
</dbReference>
<gene>
    <name evidence="1" type="primary">aroC</name>
    <name type="ordered locus">TDE_1132</name>
</gene>
<comment type="function">
    <text evidence="1">Catalyzes the anti-1,4-elimination of the C-3 phosphate and the C-6 proR hydrogen from 5-enolpyruvylshikimate-3-phosphate (EPSP) to yield chorismate, which is the branch point compound that serves as the starting substrate for the three terminal pathways of aromatic amino acid biosynthesis. This reaction introduces a second double bond into the aromatic ring system.</text>
</comment>
<comment type="catalytic activity">
    <reaction evidence="1">
        <text>5-O-(1-carboxyvinyl)-3-phosphoshikimate = chorismate + phosphate</text>
        <dbReference type="Rhea" id="RHEA:21020"/>
        <dbReference type="ChEBI" id="CHEBI:29748"/>
        <dbReference type="ChEBI" id="CHEBI:43474"/>
        <dbReference type="ChEBI" id="CHEBI:57701"/>
        <dbReference type="EC" id="4.2.3.5"/>
    </reaction>
</comment>
<comment type="cofactor">
    <cofactor evidence="1">
        <name>FMNH2</name>
        <dbReference type="ChEBI" id="CHEBI:57618"/>
    </cofactor>
    <text evidence="1">Reduced FMN (FMNH(2)).</text>
</comment>
<comment type="pathway">
    <text evidence="1">Metabolic intermediate biosynthesis; chorismate biosynthesis; chorismate from D-erythrose 4-phosphate and phosphoenolpyruvate: step 7/7.</text>
</comment>
<comment type="subunit">
    <text evidence="1">Homotetramer.</text>
</comment>
<comment type="similarity">
    <text evidence="1">Belongs to the chorismate synthase family.</text>
</comment>
<proteinExistence type="inferred from homology"/>
<keyword id="KW-0028">Amino-acid biosynthesis</keyword>
<keyword id="KW-0057">Aromatic amino acid biosynthesis</keyword>
<keyword id="KW-0274">FAD</keyword>
<keyword id="KW-0285">Flavoprotein</keyword>
<keyword id="KW-0288">FMN</keyword>
<keyword id="KW-0456">Lyase</keyword>
<keyword id="KW-0521">NADP</keyword>
<keyword id="KW-1185">Reference proteome</keyword>
<organism>
    <name type="scientific">Treponema denticola (strain ATCC 35405 / DSM 14222 / CIP 103919 / JCM 8153 / KCTC 15104)</name>
    <dbReference type="NCBI Taxonomy" id="243275"/>
    <lineage>
        <taxon>Bacteria</taxon>
        <taxon>Pseudomonadati</taxon>
        <taxon>Spirochaetota</taxon>
        <taxon>Spirochaetia</taxon>
        <taxon>Spirochaetales</taxon>
        <taxon>Treponemataceae</taxon>
        <taxon>Treponema</taxon>
    </lineage>
</organism>
<reference key="1">
    <citation type="journal article" date="2004" name="Proc. Natl. Acad. Sci. U.S.A.">
        <title>Comparison of the genome of the oral pathogen Treponema denticola with other spirochete genomes.</title>
        <authorList>
            <person name="Seshadri R."/>
            <person name="Myers G.S.A."/>
            <person name="Tettelin H."/>
            <person name="Eisen J.A."/>
            <person name="Heidelberg J.F."/>
            <person name="Dodson R.J."/>
            <person name="Davidsen T.M."/>
            <person name="DeBoy R.T."/>
            <person name="Fouts D.E."/>
            <person name="Haft D.H."/>
            <person name="Selengut J."/>
            <person name="Ren Q."/>
            <person name="Brinkac L.M."/>
            <person name="Madupu R."/>
            <person name="Kolonay J.F."/>
            <person name="Durkin S.A."/>
            <person name="Daugherty S.C."/>
            <person name="Shetty J."/>
            <person name="Shvartsbeyn A."/>
            <person name="Gebregeorgis E."/>
            <person name="Geer K."/>
            <person name="Tsegaye G."/>
            <person name="Malek J.A."/>
            <person name="Ayodeji B."/>
            <person name="Shatsman S."/>
            <person name="McLeod M.P."/>
            <person name="Smajs D."/>
            <person name="Howell J.K."/>
            <person name="Pal S."/>
            <person name="Amin A."/>
            <person name="Vashisth P."/>
            <person name="McNeill T.Z."/>
            <person name="Xiang Q."/>
            <person name="Sodergren E."/>
            <person name="Baca E."/>
            <person name="Weinstock G.M."/>
            <person name="Norris S.J."/>
            <person name="Fraser C.M."/>
            <person name="Paulsen I.T."/>
        </authorList>
    </citation>
    <scope>NUCLEOTIDE SEQUENCE [LARGE SCALE GENOMIC DNA]</scope>
    <source>
        <strain>ATCC 35405 / DSM 14222 / CIP 103919 / JCM 8153 / KCTC 15104</strain>
    </source>
</reference>
<protein>
    <recommendedName>
        <fullName evidence="1">Chorismate synthase</fullName>
        <shortName evidence="1">CS</shortName>
        <ecNumber evidence="1">4.2.3.5</ecNumber>
    </recommendedName>
    <alternativeName>
        <fullName evidence="1">5-enolpyruvylshikimate-3-phosphate phospholyase</fullName>
    </alternativeName>
</protein>
<feature type="chain" id="PRO_0000405973" description="Chorismate synthase">
    <location>
        <begin position="1"/>
        <end position="361"/>
    </location>
</feature>
<feature type="binding site" evidence="1">
    <location>
        <position position="48"/>
    </location>
    <ligand>
        <name>NADP(+)</name>
        <dbReference type="ChEBI" id="CHEBI:58349"/>
    </ligand>
</feature>
<feature type="binding site" evidence="1">
    <location>
        <begin position="126"/>
        <end position="128"/>
    </location>
    <ligand>
        <name>FMN</name>
        <dbReference type="ChEBI" id="CHEBI:58210"/>
    </ligand>
</feature>
<feature type="binding site" evidence="1">
    <location>
        <position position="269"/>
    </location>
    <ligand>
        <name>FMN</name>
        <dbReference type="ChEBI" id="CHEBI:58210"/>
    </ligand>
</feature>
<feature type="binding site" evidence="1">
    <location>
        <begin position="302"/>
        <end position="306"/>
    </location>
    <ligand>
        <name>FMN</name>
        <dbReference type="ChEBI" id="CHEBI:58210"/>
    </ligand>
</feature>
<feature type="binding site" evidence="1">
    <location>
        <position position="328"/>
    </location>
    <ligand>
        <name>FMN</name>
        <dbReference type="ChEBI" id="CHEBI:58210"/>
    </ligand>
</feature>
<name>AROC_TREDE</name>
<evidence type="ECO:0000255" key="1">
    <source>
        <dbReference type="HAMAP-Rule" id="MF_00300"/>
    </source>
</evidence>